<accession>O00155</accession>
<accession>A0AVJ5</accession>
<feature type="chain" id="PRO_0000069544" description="Probable G-protein coupled receptor 25">
    <location>
        <begin position="1"/>
        <end position="361"/>
    </location>
</feature>
<feature type="topological domain" description="Extracellular" evidence="1">
    <location>
        <begin position="1"/>
        <end position="39"/>
    </location>
</feature>
<feature type="transmembrane region" description="Helical; Name=1" evidence="1">
    <location>
        <begin position="40"/>
        <end position="60"/>
    </location>
</feature>
<feature type="topological domain" description="Cytoplasmic" evidence="1">
    <location>
        <begin position="61"/>
        <end position="75"/>
    </location>
</feature>
<feature type="transmembrane region" description="Helical; Name=2" evidence="1">
    <location>
        <begin position="76"/>
        <end position="96"/>
    </location>
</feature>
<feature type="topological domain" description="Extracellular" evidence="1">
    <location>
        <begin position="97"/>
        <end position="126"/>
    </location>
</feature>
<feature type="transmembrane region" description="Helical; Name=3" evidence="1">
    <location>
        <begin position="127"/>
        <end position="147"/>
    </location>
</feature>
<feature type="topological domain" description="Cytoplasmic" evidence="1">
    <location>
        <begin position="148"/>
        <end position="155"/>
    </location>
</feature>
<feature type="transmembrane region" description="Helical; Name=4" evidence="1">
    <location>
        <begin position="156"/>
        <end position="176"/>
    </location>
</feature>
<feature type="topological domain" description="Extracellular" evidence="1">
    <location>
        <begin position="177"/>
        <end position="200"/>
    </location>
</feature>
<feature type="transmembrane region" description="Helical; Name=5" evidence="1">
    <location>
        <begin position="201"/>
        <end position="220"/>
    </location>
</feature>
<feature type="topological domain" description="Cytoplasmic" evidence="1">
    <location>
        <begin position="221"/>
        <end position="242"/>
    </location>
</feature>
<feature type="transmembrane region" description="Helical; Name=6" evidence="1">
    <location>
        <begin position="243"/>
        <end position="263"/>
    </location>
</feature>
<feature type="topological domain" description="Extracellular" evidence="1">
    <location>
        <begin position="264"/>
        <end position="289"/>
    </location>
</feature>
<feature type="transmembrane region" description="Helical; Name=7" evidence="1">
    <location>
        <begin position="290"/>
        <end position="310"/>
    </location>
</feature>
<feature type="topological domain" description="Cytoplasmic" evidence="1">
    <location>
        <begin position="311"/>
        <end position="361"/>
    </location>
</feature>
<sequence length="361" mass="38779">MAPTEPWSPSPGSAPWDYSGLDGLEELELCPAGDLPYGYVYIPALYLAAFAVGLLGNAFVVWLLAGRRGPRRLVDTFVLHLAAADLGFVLTLPLWAAAAALGGRWPFGDGLCKLSSFALAGTRCAGALLLAGMSVDRYLAVVKLLEARPLRTPRCALASCCGVWAVALLAGLPSLVYRGLQPLPGGQDSQCGEEPSHAFQGLSLLLLLLTFVLPLVVTLFCYCRISRRLRRPPHVGRARRNSLRIIFAIESTFVGSWLPFSALRAVFHLARLGALPLPCPLLLALRWGLTIATCLAFVNSCANPLIYLLLDRSFRARALDGACGRTGRLARRISSASSLSRDDSSVFRCRAQAANTASASW</sequence>
<proteinExistence type="evidence at protein level"/>
<comment type="function">
    <text>Orphan receptor.</text>
</comment>
<comment type="interaction">
    <interactant intactId="EBI-10178951">
        <id>O00155</id>
    </interactant>
    <interactant intactId="EBI-13059134">
        <id>Q13520</id>
        <label>AQP6</label>
    </interactant>
    <organismsDiffer>false</organismsDiffer>
    <experiments>3</experiments>
</comment>
<comment type="interaction">
    <interactant intactId="EBI-10178951">
        <id>O00155</id>
    </interactant>
    <interactant intactId="EBI-721179">
        <id>P27449</id>
        <label>ATP6V0C</label>
    </interactant>
    <organismsDiffer>false</organismsDiffer>
    <experiments>3</experiments>
</comment>
<comment type="interaction">
    <interactant intactId="EBI-10178951">
        <id>O00155</id>
    </interactant>
    <interactant intactId="EBI-12935759">
        <id>O15342</id>
        <label>ATP6V0E1</label>
    </interactant>
    <organismsDiffer>false</organismsDiffer>
    <experiments>3</experiments>
</comment>
<comment type="interaction">
    <interactant intactId="EBI-10178951">
        <id>O00155</id>
    </interactant>
    <interactant intactId="EBI-19947314">
        <id>Q8NFU1</id>
        <label>BEST2</label>
    </interactant>
    <organismsDiffer>false</organismsDiffer>
    <experiments>3</experiments>
</comment>
<comment type="interaction">
    <interactant intactId="EBI-10178951">
        <id>O00155</id>
    </interactant>
    <interactant intactId="EBI-1044341">
        <id>Q9P003</id>
        <label>CNIH4</label>
    </interactant>
    <organismsDiffer>false</organismsDiffer>
    <experiments>3</experiments>
</comment>
<comment type="interaction">
    <interactant intactId="EBI-10178951">
        <id>O00155</id>
    </interactant>
    <interactant intactId="EBI-6942903">
        <id>Q96BA8</id>
        <label>CREB3L1</label>
    </interactant>
    <organismsDiffer>false</organismsDiffer>
    <experiments>7</experiments>
</comment>
<comment type="interaction">
    <interactant intactId="EBI-10178951">
        <id>O00155</id>
    </interactant>
    <interactant intactId="EBI-852194">
        <id>Q68CJ9</id>
        <label>CREB3L3</label>
    </interactant>
    <organismsDiffer>false</organismsDiffer>
    <experiments>3</experiments>
</comment>
<comment type="interaction">
    <interactant intactId="EBI-10178951">
        <id>O00155</id>
    </interactant>
    <interactant intactId="EBI-743099">
        <id>Q969F0</id>
        <label>FATE1</label>
    </interactant>
    <organismsDiffer>false</organismsDiffer>
    <experiments>5</experiments>
</comment>
<comment type="interaction">
    <interactant intactId="EBI-10178951">
        <id>O00155</id>
    </interactant>
    <interactant intactId="EBI-1058791">
        <id>Q9UJ14</id>
        <label>GGT7</label>
    </interactant>
    <organismsDiffer>false</organismsDiffer>
    <experiments>6</experiments>
</comment>
<comment type="interaction">
    <interactant intactId="EBI-10178951">
        <id>O00155</id>
    </interactant>
    <interactant intactId="EBI-17565645">
        <id>P08034</id>
        <label>GJB1</label>
    </interactant>
    <organismsDiffer>false</organismsDiffer>
    <experiments>3</experiments>
</comment>
<comment type="interaction">
    <interactant intactId="EBI-10178951">
        <id>O00155</id>
    </interactant>
    <interactant intactId="EBI-12190633">
        <id>Q70UQ0-4</id>
        <label>IKBIP</label>
    </interactant>
    <organismsDiffer>false</organismsDiffer>
    <experiments>3</experiments>
</comment>
<comment type="interaction">
    <interactant intactId="EBI-10178951">
        <id>O00155</id>
    </interactant>
    <interactant intactId="EBI-749265">
        <id>Q8N6L0</id>
        <label>KASH5</label>
    </interactant>
    <organismsDiffer>false</organismsDiffer>
    <experiments>6</experiments>
</comment>
<comment type="interaction">
    <interactant intactId="EBI-10178951">
        <id>O00155</id>
    </interactant>
    <interactant intactId="EBI-10173166">
        <id>Q5T700</id>
        <label>LDLRAD1</label>
    </interactant>
    <organismsDiffer>false</organismsDiffer>
    <experiments>3</experiments>
</comment>
<comment type="interaction">
    <interactant intactId="EBI-10178951">
        <id>O00155</id>
    </interactant>
    <interactant intactId="EBI-3920969">
        <id>Q6N075</id>
        <label>MFSD5</label>
    </interactant>
    <organismsDiffer>false</organismsDiffer>
    <experiments>3</experiments>
</comment>
<comment type="interaction">
    <interactant intactId="EBI-10178951">
        <id>O00155</id>
    </interactant>
    <interactant intactId="EBI-6163737">
        <id>Q8N4V1</id>
        <label>MMGT1</label>
    </interactant>
    <organismsDiffer>false</organismsDiffer>
    <experiments>3</experiments>
</comment>
<comment type="interaction">
    <interactant intactId="EBI-10178951">
        <id>O00155</id>
    </interactant>
    <interactant intactId="EBI-10178964">
        <id>Q58DX5</id>
        <label>NAALADL2</label>
    </interactant>
    <organismsDiffer>false</organismsDiffer>
    <experiments>3</experiments>
</comment>
<comment type="interaction">
    <interactant intactId="EBI-10178951">
        <id>O00155</id>
    </interactant>
    <interactant intactId="EBI-302345">
        <id>Q8ND90</id>
        <label>PNMA1</label>
    </interactant>
    <organismsDiffer>false</organismsDiffer>
    <experiments>3</experiments>
</comment>
<comment type="interaction">
    <interactant intactId="EBI-10178951">
        <id>O00155</id>
    </interactant>
    <interactant intactId="EBI-12384280">
        <id>Q9HD89</id>
        <label>RETN</label>
    </interactant>
    <organismsDiffer>false</organismsDiffer>
    <experiments>5</experiments>
</comment>
<comment type="interaction">
    <interactant intactId="EBI-10178951">
        <id>O00155</id>
    </interactant>
    <interactant intactId="EBI-15853497">
        <id>Q9UBD6</id>
        <label>RHCG</label>
    </interactant>
    <organismsDiffer>false</organismsDiffer>
    <experiments>3</experiments>
</comment>
<comment type="interaction">
    <interactant intactId="EBI-10178951">
        <id>O00155</id>
    </interactant>
    <interactant intactId="EBI-18037857">
        <id>Q3SXP7</id>
        <label>SHISAL1</label>
    </interactant>
    <organismsDiffer>false</organismsDiffer>
    <experiments>3</experiments>
</comment>
<comment type="interaction">
    <interactant intactId="EBI-10178951">
        <id>O00155</id>
    </interactant>
    <interactant intactId="EBI-3921243">
        <id>O60669</id>
        <label>SLC16A7</label>
    </interactant>
    <organismsDiffer>false</organismsDiffer>
    <experiments>3</experiments>
</comment>
<comment type="interaction">
    <interactant intactId="EBI-10178951">
        <id>O00155</id>
    </interactant>
    <interactant intactId="EBI-13389236">
        <id>Q7Z769</id>
        <label>SLC35E3</label>
    </interactant>
    <organismsDiffer>false</organismsDiffer>
    <experiments>3</experiments>
</comment>
<comment type="interaction">
    <interactant intactId="EBI-10178951">
        <id>O00155</id>
    </interactant>
    <interactant intactId="EBI-2822217">
        <id>Q96BD0</id>
        <label>SLCO4A1</label>
    </interactant>
    <organismsDiffer>false</organismsDiffer>
    <experiments>3</experiments>
</comment>
<comment type="interaction">
    <interactant intactId="EBI-10178951">
        <id>O00155</id>
    </interactant>
    <interactant intactId="EBI-1211440">
        <id>P27105</id>
        <label>STOM</label>
    </interactant>
    <organismsDiffer>false</organismsDiffer>
    <experiments>3</experiments>
</comment>
<comment type="interaction">
    <interactant intactId="EBI-10178951">
        <id>O00155</id>
    </interactant>
    <interactant intactId="EBI-10982110">
        <id>Q96Q45-2</id>
        <label>TMEM237</label>
    </interactant>
    <organismsDiffer>false</organismsDiffer>
    <experiments>3</experiments>
</comment>
<comment type="interaction">
    <interactant intactId="EBI-10178951">
        <id>O00155</id>
    </interactant>
    <interactant intactId="EBI-10314986">
        <id>Q9NWD8</id>
        <label>TMEM248</label>
    </interactant>
    <organismsDiffer>false</organismsDiffer>
    <experiments>3</experiments>
</comment>
<comment type="interaction">
    <interactant intactId="EBI-10178951">
        <id>O00155</id>
    </interactant>
    <interactant intactId="EBI-18178701">
        <id>Q4KMG9</id>
        <label>TMEM52B</label>
    </interactant>
    <organismsDiffer>false</organismsDiffer>
    <experiments>3</experiments>
</comment>
<comment type="interaction">
    <interactant intactId="EBI-10178951">
        <id>O00155</id>
    </interactant>
    <interactant intactId="EBI-18976295">
        <id>Q86W33-2</id>
        <label>TPRA1</label>
    </interactant>
    <organismsDiffer>false</organismsDiffer>
    <experiments>3</experiments>
</comment>
<comment type="interaction">
    <interactant intactId="EBI-10178951">
        <id>O00155</id>
    </interactant>
    <interactant intactId="EBI-2466403">
        <id>O95859</id>
        <label>TSPAN12</label>
    </interactant>
    <organismsDiffer>false</organismsDiffer>
    <experiments>3</experiments>
</comment>
<comment type="interaction">
    <interactant intactId="EBI-10178951">
        <id>O00155</id>
    </interactant>
    <interactant intactId="EBI-1188298">
        <id>O95292</id>
        <label>VAPB</label>
    </interactant>
    <organismsDiffer>false</organismsDiffer>
    <experiments>3</experiments>
</comment>
<comment type="interaction">
    <interactant intactId="EBI-10178951">
        <id>O00155</id>
    </interactant>
    <interactant intactId="EBI-10178947">
        <id>Q53XM7</id>
        <label>VAPB</label>
    </interactant>
    <organismsDiffer>false</organismsDiffer>
    <experiments>3</experiments>
</comment>
<comment type="subcellular location">
    <subcellularLocation>
        <location>Cell membrane</location>
        <topology>Multi-pass membrane protein</topology>
    </subcellularLocation>
</comment>
<comment type="similarity">
    <text evidence="2">Belongs to the G-protein coupled receptor 1 family.</text>
</comment>
<dbReference type="EMBL" id="U91939">
    <property type="protein sequence ID" value="AAB50155.2"/>
    <property type="molecule type" value="Genomic_DNA"/>
</dbReference>
<dbReference type="EMBL" id="BC126386">
    <property type="protein sequence ID" value="AAI26387.1"/>
    <property type="molecule type" value="mRNA"/>
</dbReference>
<dbReference type="EMBL" id="BC126388">
    <property type="protein sequence ID" value="AAI26389.1"/>
    <property type="molecule type" value="mRNA"/>
</dbReference>
<dbReference type="CCDS" id="CCDS1405.1"/>
<dbReference type="PIR" id="JC5277">
    <property type="entry name" value="JC5277"/>
</dbReference>
<dbReference type="RefSeq" id="NP_005289.2">
    <property type="nucleotide sequence ID" value="NM_005298.3"/>
</dbReference>
<dbReference type="SMR" id="O00155"/>
<dbReference type="BioGRID" id="109107">
    <property type="interactions" value="31"/>
</dbReference>
<dbReference type="FunCoup" id="O00155">
    <property type="interactions" value="501"/>
</dbReference>
<dbReference type="IntAct" id="O00155">
    <property type="interactions" value="31"/>
</dbReference>
<dbReference type="STRING" id="9606.ENSP00000301917"/>
<dbReference type="ChEMBL" id="CHEMBL4523858"/>
<dbReference type="iPTMnet" id="O00155"/>
<dbReference type="PhosphoSitePlus" id="O00155"/>
<dbReference type="BioMuta" id="GPR25"/>
<dbReference type="MassIVE" id="O00155"/>
<dbReference type="PaxDb" id="9606-ENSP00000301917"/>
<dbReference type="PeptideAtlas" id="O00155"/>
<dbReference type="ProteomicsDB" id="47743"/>
<dbReference type="Antibodypedia" id="20636">
    <property type="antibodies" value="171 antibodies from 27 providers"/>
</dbReference>
<dbReference type="DNASU" id="2848"/>
<dbReference type="Ensembl" id="ENST00000304244.5">
    <property type="protein sequence ID" value="ENSP00000301917.2"/>
    <property type="gene ID" value="ENSG00000170128.5"/>
</dbReference>
<dbReference type="GeneID" id="2848"/>
<dbReference type="KEGG" id="hsa:2848"/>
<dbReference type="MANE-Select" id="ENST00000304244.5">
    <property type="protein sequence ID" value="ENSP00000301917.2"/>
    <property type="RefSeq nucleotide sequence ID" value="NM_005298.4"/>
    <property type="RefSeq protein sequence ID" value="NP_005289.2"/>
</dbReference>
<dbReference type="UCSC" id="uc001gvn.3">
    <property type="organism name" value="human"/>
</dbReference>
<dbReference type="AGR" id="HGNC:4480"/>
<dbReference type="CTD" id="2848"/>
<dbReference type="DisGeNET" id="2848"/>
<dbReference type="GeneCards" id="GPR25"/>
<dbReference type="HGNC" id="HGNC:4480">
    <property type="gene designation" value="GPR25"/>
</dbReference>
<dbReference type="HPA" id="ENSG00000170128">
    <property type="expression patterns" value="Tissue enriched (stomach)"/>
</dbReference>
<dbReference type="MIM" id="602174">
    <property type="type" value="gene"/>
</dbReference>
<dbReference type="neXtProt" id="NX_O00155"/>
<dbReference type="OpenTargets" id="ENSG00000170128"/>
<dbReference type="PharmGKB" id="PA28868"/>
<dbReference type="VEuPathDB" id="HostDB:ENSG00000170128"/>
<dbReference type="eggNOG" id="KOG3656">
    <property type="taxonomic scope" value="Eukaryota"/>
</dbReference>
<dbReference type="GeneTree" id="ENSGT01130000278303"/>
<dbReference type="HOGENOM" id="CLU_009579_8_1_1"/>
<dbReference type="InParanoid" id="O00155"/>
<dbReference type="OMA" id="IYVFMDQ"/>
<dbReference type="OrthoDB" id="8935849at2759"/>
<dbReference type="PAN-GO" id="O00155">
    <property type="GO annotations" value="3 GO annotations based on evolutionary models"/>
</dbReference>
<dbReference type="PhylomeDB" id="O00155"/>
<dbReference type="TreeFam" id="TF330024"/>
<dbReference type="PathwayCommons" id="O00155"/>
<dbReference type="Reactome" id="R-HSA-418555">
    <property type="pathway name" value="G alpha (s) signalling events"/>
</dbReference>
<dbReference type="SignaLink" id="O00155"/>
<dbReference type="SIGNOR" id="O00155"/>
<dbReference type="BioGRID-ORCS" id="2848">
    <property type="hits" value="16 hits in 1136 CRISPR screens"/>
</dbReference>
<dbReference type="GeneWiki" id="GPR25"/>
<dbReference type="GenomeRNAi" id="2848"/>
<dbReference type="Pharos" id="O00155">
    <property type="development level" value="Tdark"/>
</dbReference>
<dbReference type="PRO" id="PR:O00155"/>
<dbReference type="Proteomes" id="UP000005640">
    <property type="component" value="Chromosome 1"/>
</dbReference>
<dbReference type="RNAct" id="O00155">
    <property type="molecule type" value="protein"/>
</dbReference>
<dbReference type="Bgee" id="ENSG00000170128">
    <property type="expression patterns" value="Expressed in primordial germ cell in gonad and 50 other cell types or tissues"/>
</dbReference>
<dbReference type="GO" id="GO:0005886">
    <property type="term" value="C:plasma membrane"/>
    <property type="evidence" value="ECO:0000318"/>
    <property type="project" value="GO_Central"/>
</dbReference>
<dbReference type="GO" id="GO:0004930">
    <property type="term" value="F:G protein-coupled receptor activity"/>
    <property type="evidence" value="ECO:0000318"/>
    <property type="project" value="GO_Central"/>
</dbReference>
<dbReference type="GO" id="GO:0007186">
    <property type="term" value="P:G protein-coupled receptor signaling pathway"/>
    <property type="evidence" value="ECO:0000318"/>
    <property type="project" value="GO_Central"/>
</dbReference>
<dbReference type="FunFam" id="1.20.1070.10:FF:000276">
    <property type="entry name" value="G protein-coupled receptor 25"/>
    <property type="match status" value="1"/>
</dbReference>
<dbReference type="Gene3D" id="1.20.1070.10">
    <property type="entry name" value="Rhodopsin 7-helix transmembrane proteins"/>
    <property type="match status" value="1"/>
</dbReference>
<dbReference type="InterPro" id="IPR050119">
    <property type="entry name" value="CCR1-9-like"/>
</dbReference>
<dbReference type="InterPro" id="IPR000276">
    <property type="entry name" value="GPCR_Rhodpsn"/>
</dbReference>
<dbReference type="InterPro" id="IPR017452">
    <property type="entry name" value="GPCR_Rhodpsn_7TM"/>
</dbReference>
<dbReference type="PANTHER" id="PTHR10489">
    <property type="entry name" value="CELL ADHESION MOLECULE"/>
    <property type="match status" value="1"/>
</dbReference>
<dbReference type="PANTHER" id="PTHR10489:SF954">
    <property type="entry name" value="G PROTEIN-COUPLED RECEPTOR 25"/>
    <property type="match status" value="1"/>
</dbReference>
<dbReference type="Pfam" id="PF00001">
    <property type="entry name" value="7tm_1"/>
    <property type="match status" value="1"/>
</dbReference>
<dbReference type="PRINTS" id="PR00237">
    <property type="entry name" value="GPCRRHODOPSN"/>
</dbReference>
<dbReference type="SUPFAM" id="SSF81321">
    <property type="entry name" value="Family A G protein-coupled receptor-like"/>
    <property type="match status" value="1"/>
</dbReference>
<dbReference type="PROSITE" id="PS00237">
    <property type="entry name" value="G_PROTEIN_RECEP_F1_1"/>
    <property type="match status" value="1"/>
</dbReference>
<dbReference type="PROSITE" id="PS50262">
    <property type="entry name" value="G_PROTEIN_RECEP_F1_2"/>
    <property type="match status" value="1"/>
</dbReference>
<evidence type="ECO:0000255" key="1"/>
<evidence type="ECO:0000255" key="2">
    <source>
        <dbReference type="PROSITE-ProRule" id="PRU00521"/>
    </source>
</evidence>
<protein>
    <recommendedName>
        <fullName>Probable G-protein coupled receptor 25</fullName>
    </recommendedName>
</protein>
<reference key="1">
    <citation type="journal article" date="1997" name="Biochem. Biophys. Res. Commun.">
        <title>Discovery of a novel human G protein-coupled receptor gene (GPR25) located on chromosome 1.</title>
        <authorList>
            <person name="Jung B.P."/>
            <person name="Nguyen T."/>
            <person name="Kolakowski L.F. Jr."/>
            <person name="Lynch K.R."/>
            <person name="Heng H.H.Q."/>
            <person name="George S.R."/>
            <person name="O'Dowd B.F."/>
        </authorList>
    </citation>
    <scope>NUCLEOTIDE SEQUENCE [GENOMIC DNA]</scope>
</reference>
<reference key="2">
    <citation type="submission" date="2003-11" db="EMBL/GenBank/DDBJ databases">
        <authorList>
            <person name="Jung B.P."/>
            <person name="Nguyen T."/>
            <person name="Kolakowski L.F. Jr."/>
            <person name="Lynch K.R."/>
            <person name="Heng H.H.Q."/>
            <person name="George S.R."/>
            <person name="O'Dowd B.F."/>
        </authorList>
    </citation>
    <scope>SEQUENCE REVISION TO 101-104; 116; 124 AND 157</scope>
</reference>
<reference key="3">
    <citation type="journal article" date="2004" name="Genome Res.">
        <title>The status, quality, and expansion of the NIH full-length cDNA project: the Mammalian Gene Collection (MGC).</title>
        <authorList>
            <consortium name="The MGC Project Team"/>
        </authorList>
    </citation>
    <scope>NUCLEOTIDE SEQUENCE [LARGE SCALE MRNA]</scope>
    <source>
        <tissue>Brain</tissue>
    </source>
</reference>
<organism>
    <name type="scientific">Homo sapiens</name>
    <name type="common">Human</name>
    <dbReference type="NCBI Taxonomy" id="9606"/>
    <lineage>
        <taxon>Eukaryota</taxon>
        <taxon>Metazoa</taxon>
        <taxon>Chordata</taxon>
        <taxon>Craniata</taxon>
        <taxon>Vertebrata</taxon>
        <taxon>Euteleostomi</taxon>
        <taxon>Mammalia</taxon>
        <taxon>Eutheria</taxon>
        <taxon>Euarchontoglires</taxon>
        <taxon>Primates</taxon>
        <taxon>Haplorrhini</taxon>
        <taxon>Catarrhini</taxon>
        <taxon>Hominidae</taxon>
        <taxon>Homo</taxon>
    </lineage>
</organism>
<gene>
    <name type="primary">GPR25</name>
</gene>
<name>GPR25_HUMAN</name>
<keyword id="KW-1003">Cell membrane</keyword>
<keyword id="KW-0297">G-protein coupled receptor</keyword>
<keyword id="KW-0472">Membrane</keyword>
<keyword id="KW-1267">Proteomics identification</keyword>
<keyword id="KW-0675">Receptor</keyword>
<keyword id="KW-1185">Reference proteome</keyword>
<keyword id="KW-0807">Transducer</keyword>
<keyword id="KW-0812">Transmembrane</keyword>
<keyword id="KW-1133">Transmembrane helix</keyword>